<protein>
    <recommendedName>
        <fullName evidence="1">UPF0122 protein spr1167</fullName>
    </recommendedName>
</protein>
<proteinExistence type="inferred from homology"/>
<comment type="function">
    <text evidence="1">Might take part in the signal recognition particle (SRP) pathway. This is inferred from the conservation of its genetic proximity to ftsY/ffh. May be a regulatory protein.</text>
</comment>
<comment type="similarity">
    <text evidence="1">Belongs to the UPF0122 family.</text>
</comment>
<sequence>MEIEKTNRMNALFEFYAALLTDKQMNYIELYYADDYSLAEIAEEFGVSRQAVYDNIKRTEKILEDYEMKLHMYSDYIVRSQIFDQILERYPKDNFLQEQIEILTSIDNRE</sequence>
<feature type="chain" id="PRO_0000211887" description="UPF0122 protein spr1167">
    <location>
        <begin position="1"/>
        <end position="110"/>
    </location>
</feature>
<accession>Q8DPH0</accession>
<gene>
    <name type="ordered locus">spr1167</name>
</gene>
<keyword id="KW-1185">Reference proteome</keyword>
<reference key="1">
    <citation type="journal article" date="2001" name="J. Bacteriol.">
        <title>Genome of the bacterium Streptococcus pneumoniae strain R6.</title>
        <authorList>
            <person name="Hoskins J."/>
            <person name="Alborn W.E. Jr."/>
            <person name="Arnold J."/>
            <person name="Blaszczak L.C."/>
            <person name="Burgett S."/>
            <person name="DeHoff B.S."/>
            <person name="Estrem S.T."/>
            <person name="Fritz L."/>
            <person name="Fu D.-J."/>
            <person name="Fuller W."/>
            <person name="Geringer C."/>
            <person name="Gilmour R."/>
            <person name="Glass J.S."/>
            <person name="Khoja H."/>
            <person name="Kraft A.R."/>
            <person name="Lagace R.E."/>
            <person name="LeBlanc D.J."/>
            <person name="Lee L.N."/>
            <person name="Lefkowitz E.J."/>
            <person name="Lu J."/>
            <person name="Matsushima P."/>
            <person name="McAhren S.M."/>
            <person name="McHenney M."/>
            <person name="McLeaster K."/>
            <person name="Mundy C.W."/>
            <person name="Nicas T.I."/>
            <person name="Norris F.H."/>
            <person name="O'Gara M."/>
            <person name="Peery R.B."/>
            <person name="Robertson G.T."/>
            <person name="Rockey P."/>
            <person name="Sun P.-M."/>
            <person name="Winkler M.E."/>
            <person name="Yang Y."/>
            <person name="Young-Bellido M."/>
            <person name="Zhao G."/>
            <person name="Zook C.A."/>
            <person name="Baltz R.H."/>
            <person name="Jaskunas S.R."/>
            <person name="Rosteck P.R. Jr."/>
            <person name="Skatrud P.L."/>
            <person name="Glass J.I."/>
        </authorList>
    </citation>
    <scope>NUCLEOTIDE SEQUENCE [LARGE SCALE GENOMIC DNA]</scope>
    <source>
        <strain>ATCC BAA-255 / R6</strain>
    </source>
</reference>
<organism>
    <name type="scientific">Streptococcus pneumoniae (strain ATCC BAA-255 / R6)</name>
    <dbReference type="NCBI Taxonomy" id="171101"/>
    <lineage>
        <taxon>Bacteria</taxon>
        <taxon>Bacillati</taxon>
        <taxon>Bacillota</taxon>
        <taxon>Bacilli</taxon>
        <taxon>Lactobacillales</taxon>
        <taxon>Streptococcaceae</taxon>
        <taxon>Streptococcus</taxon>
    </lineage>
</organism>
<evidence type="ECO:0000255" key="1">
    <source>
        <dbReference type="HAMAP-Rule" id="MF_00245"/>
    </source>
</evidence>
<name>Y1167_STRR6</name>
<dbReference type="EMBL" id="AE007317">
    <property type="protein sequence ID" value="AAK99970.1"/>
    <property type="molecule type" value="Genomic_DNA"/>
</dbReference>
<dbReference type="PIR" id="F98017">
    <property type="entry name" value="F98017"/>
</dbReference>
<dbReference type="RefSeq" id="NP_358760.1">
    <property type="nucleotide sequence ID" value="NC_003098.1"/>
</dbReference>
<dbReference type="RefSeq" id="WP_000402071.1">
    <property type="nucleotide sequence ID" value="NC_003098.1"/>
</dbReference>
<dbReference type="SMR" id="Q8DPH0"/>
<dbReference type="STRING" id="171101.spr1167"/>
<dbReference type="KEGG" id="spr:spr1167"/>
<dbReference type="PATRIC" id="fig|171101.6.peg.1265"/>
<dbReference type="eggNOG" id="COG2739">
    <property type="taxonomic scope" value="Bacteria"/>
</dbReference>
<dbReference type="HOGENOM" id="CLU_129218_1_0_9"/>
<dbReference type="Proteomes" id="UP000000586">
    <property type="component" value="Chromosome"/>
</dbReference>
<dbReference type="Gene3D" id="1.10.10.10">
    <property type="entry name" value="Winged helix-like DNA-binding domain superfamily/Winged helix DNA-binding domain"/>
    <property type="match status" value="1"/>
</dbReference>
<dbReference type="HAMAP" id="MF_00245">
    <property type="entry name" value="UPF0122"/>
    <property type="match status" value="1"/>
</dbReference>
<dbReference type="InterPro" id="IPR013324">
    <property type="entry name" value="RNA_pol_sigma_r3/r4-like"/>
</dbReference>
<dbReference type="InterPro" id="IPR007394">
    <property type="entry name" value="UPF0122"/>
</dbReference>
<dbReference type="InterPro" id="IPR054831">
    <property type="entry name" value="UPF0122_fam_protein"/>
</dbReference>
<dbReference type="InterPro" id="IPR036388">
    <property type="entry name" value="WH-like_DNA-bd_sf"/>
</dbReference>
<dbReference type="NCBIfam" id="NF001066">
    <property type="entry name" value="PRK00118.1-1"/>
    <property type="match status" value="1"/>
</dbReference>
<dbReference type="NCBIfam" id="NF001068">
    <property type="entry name" value="PRK00118.1-4"/>
    <property type="match status" value="1"/>
</dbReference>
<dbReference type="NCBIfam" id="NF001070">
    <property type="entry name" value="PRK00118.1-6"/>
    <property type="match status" value="1"/>
</dbReference>
<dbReference type="NCBIfam" id="NF045758">
    <property type="entry name" value="YlxM"/>
    <property type="match status" value="1"/>
</dbReference>
<dbReference type="PANTHER" id="PTHR40083">
    <property type="entry name" value="UPF0122 PROTEIN CBO2450/CLC_2298"/>
    <property type="match status" value="1"/>
</dbReference>
<dbReference type="PANTHER" id="PTHR40083:SF1">
    <property type="entry name" value="UPF0122 PROTEIN YLXM"/>
    <property type="match status" value="1"/>
</dbReference>
<dbReference type="Pfam" id="PF04297">
    <property type="entry name" value="UPF0122"/>
    <property type="match status" value="1"/>
</dbReference>
<dbReference type="SUPFAM" id="SSF88659">
    <property type="entry name" value="Sigma3 and sigma4 domains of RNA polymerase sigma factors"/>
    <property type="match status" value="1"/>
</dbReference>